<gene>
    <name type="primary">BTF3L4</name>
</gene>
<feature type="chain" id="PRO_0000307381" description="Transcription factor BTF3 homolog 4">
    <location>
        <begin position="1"/>
        <end position="158"/>
    </location>
</feature>
<feature type="domain" description="NAC-A/B" evidence="2">
    <location>
        <begin position="33"/>
        <end position="98"/>
    </location>
</feature>
<feature type="region of interest" description="Disordered" evidence="3">
    <location>
        <begin position="122"/>
        <end position="158"/>
    </location>
</feature>
<feature type="compositionally biased region" description="Acidic residues" evidence="3">
    <location>
        <begin position="134"/>
        <end position="150"/>
    </location>
</feature>
<feature type="modified residue" description="N6-methyllysine" evidence="1">
    <location>
        <position position="5"/>
    </location>
</feature>
<feature type="modified residue" description="Phosphothreonine" evidence="1">
    <location>
        <position position="111"/>
    </location>
</feature>
<dbReference type="EMBL" id="CR858422">
    <property type="protein sequence ID" value="CAH90651.1"/>
    <property type="molecule type" value="mRNA"/>
</dbReference>
<dbReference type="RefSeq" id="NP_001125352.1">
    <property type="nucleotide sequence ID" value="NM_001131880.1"/>
</dbReference>
<dbReference type="SMR" id="Q5RC59"/>
<dbReference type="FunCoup" id="Q5RC59">
    <property type="interactions" value="3138"/>
</dbReference>
<dbReference type="STRING" id="9601.ENSPPYP00000001572"/>
<dbReference type="GeneID" id="100172254"/>
<dbReference type="KEGG" id="pon:100172254"/>
<dbReference type="CTD" id="91408"/>
<dbReference type="eggNOG" id="KOG2240">
    <property type="taxonomic scope" value="Eukaryota"/>
</dbReference>
<dbReference type="HOGENOM" id="CLU_1137725_0_0_1"/>
<dbReference type="InParanoid" id="Q5RC59"/>
<dbReference type="OrthoDB" id="8033832at2759"/>
<dbReference type="Proteomes" id="UP000001595">
    <property type="component" value="Unplaced"/>
</dbReference>
<dbReference type="CDD" id="cd22055">
    <property type="entry name" value="NAC_BTF3"/>
    <property type="match status" value="1"/>
</dbReference>
<dbReference type="FunFam" id="2.20.70.30:FF:000001">
    <property type="entry name" value="Transcription factor BTF3 homolog"/>
    <property type="match status" value="1"/>
</dbReference>
<dbReference type="Gene3D" id="2.20.70.30">
    <property type="entry name" value="Nascent polypeptide-associated complex domain"/>
    <property type="match status" value="1"/>
</dbReference>
<dbReference type="InterPro" id="IPR039370">
    <property type="entry name" value="BTF3"/>
</dbReference>
<dbReference type="InterPro" id="IPR038187">
    <property type="entry name" value="NAC_A/B_dom_sf"/>
</dbReference>
<dbReference type="InterPro" id="IPR002715">
    <property type="entry name" value="Nas_poly-pep-assoc_cplx_dom"/>
</dbReference>
<dbReference type="PANTHER" id="PTHR10351">
    <property type="entry name" value="TRANSCRIPTION FACTOR BTF3 FAMILY MEMBER"/>
    <property type="match status" value="1"/>
</dbReference>
<dbReference type="Pfam" id="PF01849">
    <property type="entry name" value="NAC"/>
    <property type="match status" value="1"/>
</dbReference>
<dbReference type="SMART" id="SM01407">
    <property type="entry name" value="NAC"/>
    <property type="match status" value="1"/>
</dbReference>
<dbReference type="PROSITE" id="PS51151">
    <property type="entry name" value="NAC_AB"/>
    <property type="match status" value="1"/>
</dbReference>
<organism>
    <name type="scientific">Pongo abelii</name>
    <name type="common">Sumatran orangutan</name>
    <name type="synonym">Pongo pygmaeus abelii</name>
    <dbReference type="NCBI Taxonomy" id="9601"/>
    <lineage>
        <taxon>Eukaryota</taxon>
        <taxon>Metazoa</taxon>
        <taxon>Chordata</taxon>
        <taxon>Craniata</taxon>
        <taxon>Vertebrata</taxon>
        <taxon>Euteleostomi</taxon>
        <taxon>Mammalia</taxon>
        <taxon>Eutheria</taxon>
        <taxon>Euarchontoglires</taxon>
        <taxon>Primates</taxon>
        <taxon>Haplorrhini</taxon>
        <taxon>Catarrhini</taxon>
        <taxon>Hominidae</taxon>
        <taxon>Pongo</taxon>
    </lineage>
</organism>
<evidence type="ECO:0000250" key="1">
    <source>
        <dbReference type="UniProtKB" id="P20290"/>
    </source>
</evidence>
<evidence type="ECO:0000255" key="2">
    <source>
        <dbReference type="PROSITE-ProRule" id="PRU00507"/>
    </source>
</evidence>
<evidence type="ECO:0000256" key="3">
    <source>
        <dbReference type="SAM" id="MobiDB-lite"/>
    </source>
</evidence>
<evidence type="ECO:0000305" key="4"/>
<keyword id="KW-0488">Methylation</keyword>
<keyword id="KW-0597">Phosphoprotein</keyword>
<keyword id="KW-1185">Reference proteome</keyword>
<proteinExistence type="evidence at transcript level"/>
<reference key="1">
    <citation type="submission" date="2004-11" db="EMBL/GenBank/DDBJ databases">
        <authorList>
            <consortium name="The German cDNA consortium"/>
        </authorList>
    </citation>
    <scope>NUCLEOTIDE SEQUENCE [LARGE SCALE MRNA]</scope>
    <source>
        <tissue>Heart</tissue>
    </source>
</reference>
<name>BT3L4_PONAB</name>
<sequence length="158" mass="17271">MNQEKLAKLQAQVRIGGKGTARRKKKVVHRTATADDKKLQSSLKKLAVNNIAGIEEVNMIKDDGTVIHFNNPKVQASLSANTFAITGHAEAKPITEMLPGILSQLGADSLTSLRKLAEQFPRQVLDSKAPKPEDIDEEDDDVPDLVENFDEASKNEAN</sequence>
<accession>Q5RC59</accession>
<comment type="similarity">
    <text evidence="4">Belongs to the NAC-beta family.</text>
</comment>
<protein>
    <recommendedName>
        <fullName>Transcription factor BTF3 homolog 4</fullName>
    </recommendedName>
    <alternativeName>
        <fullName>Basic transcription factor 3-like 4</fullName>
    </alternativeName>
</protein>